<protein>
    <recommendedName>
        <fullName>Chaperone protein ClpB</fullName>
    </recommendedName>
</protein>
<comment type="function">
    <text evidence="1">Part of a stress-induced multi-chaperone system, it is involved in the recovery of the cell from heat-induced damage, in cooperation with DnaK, DnaJ and GrpE. Acts before DnaK, in the processing of protein aggregates. Protein binding stimulates the ATPase activity; ATP hydrolysis unfolds the denatured protein aggregates, which probably helps expose new hydrophobic binding sites on the surface of ClpB-bound aggregates, contributing to the solubilization and refolding of denatured protein aggregates by DnaK (By similarity).</text>
</comment>
<comment type="subunit">
    <text evidence="1">Homohexamer. The oligomerization is ATP-dependent (By similarity).</text>
</comment>
<comment type="subcellular location">
    <subcellularLocation>
        <location evidence="3">Cytoplasm</location>
    </subcellularLocation>
</comment>
<comment type="domain">
    <text evidence="1">The Clp repeat (R) domain probably functions as a substrate-discriminating domain, recruiting aggregated proteins to the ClpB hexamer and/or stabilizing bound proteins. The NBD2 domain is responsible for oligomerization, whereas the NBD1 domain stabilizes the hexamer probably in an ATP-dependent manner. The movement of the coiled-coil domain is essential for ClpB ability to rescue proteins from an aggregated state, probably by pulling apart large aggregated proteins, which are bound between the coiled-coils motifs of adjacent ClpB subunits in the functional hexamer (By similarity).</text>
</comment>
<comment type="similarity">
    <text evidence="3">Belongs to the ClpA/ClpB family.</text>
</comment>
<sequence length="856" mass="95859">MNFEKFTTKLQEALNEAQSLAVAKDNAYIEPVHLLYALVKQQDGAIAPLFTTLNVSTQTLINELELILNQLPQVTGTTTQASQQLIRLLNQTAKLAQQFNDSFISSELFLLAALDDHGSLGKLFKAFGLTKENVTQAISQMRGGESVNNQNAEQTRQALQKYTIDLTERAKTGKLDPVIGRDEEIRRTVQVLQRRTKNNPVLIGEPGVGKTAIVEGLAQRIVNGEVPEGLKNKRVLSLDMGALIAGAKYRGEFEERLKAVLNELAKEEGQVILFIDEIHTMVGAGKTDGAMDAGNLLKPSLARGELHCVGATTLDEYRQYIEKDAALERRFQKVLVDEPSVEDTIAILRGLKERYEIHHHVQITDPAIVAAATLSHRYISDRQLPDKAIDLIDEAASSLRMEIDSKPEPLDKLERRIIQLKLERQALQKEKDEASRQRLAKLDEEMTAKAQEYSALEEVWKAEKSALLGTQHLKTELENARIAMDQAKRADNFEKMSELQYGTIPALEKQLQDAIKREEENNDHHLLRTKVTEEEIAEVLSKATGIPITKMMEGEKEKLLRMEQVLHSRVIGQNEAVEAVANAILRSRAGLADPNKPIGSFLFLGPTGVGKTELSKTLANFLFDDENAIVRIDMSEFMEKHSVSRLVGAPPGYVGYEQGGYLTEAVRRRPYSVVLLDEVEKAHPDVFNILLQVLDDGRLTDGQGRTVDFRNTVVIMTSNLGAHLIQENAEITYLAMKEMVMSVVSQHFRPEFINRIDETVVFHPLDQQHIRAIANIQLQRLIRRLAERGYQVTISDTALDHISQAGFDSLFGARPLKRAIQQELENPLAQQILSGKLLPNNPVIIDYQDNHIIAKQ</sequence>
<accession>Q7VNH1</accession>
<feature type="chain" id="PRO_0000191126" description="Chaperone protein ClpB">
    <location>
        <begin position="1"/>
        <end position="856"/>
    </location>
</feature>
<feature type="domain" description="Clp R" evidence="2">
    <location>
        <begin position="3"/>
        <end position="144"/>
    </location>
</feature>
<feature type="region of interest" description="Repeat 1" evidence="2">
    <location>
        <begin position="6"/>
        <end position="71"/>
    </location>
</feature>
<feature type="region of interest" description="Repeat 2" evidence="2">
    <location>
        <begin position="82"/>
        <end position="144"/>
    </location>
</feature>
<feature type="region of interest" description="NBD1" evidence="1">
    <location>
        <begin position="157"/>
        <end position="338"/>
    </location>
</feature>
<feature type="region of interest" description="Linker" evidence="1">
    <location>
        <begin position="339"/>
        <end position="545"/>
    </location>
</feature>
<feature type="region of interest" description="NBD2" evidence="1">
    <location>
        <begin position="555"/>
        <end position="764"/>
    </location>
</feature>
<feature type="region of interest" description="C-terminal" evidence="1">
    <location>
        <begin position="765"/>
        <end position="856"/>
    </location>
</feature>
<feature type="coiled-coil region" evidence="1">
    <location>
        <begin position="389"/>
        <end position="523"/>
    </location>
</feature>
<feature type="binding site" evidence="1">
    <location>
        <begin position="204"/>
        <end position="211"/>
    </location>
    <ligand>
        <name>ATP</name>
        <dbReference type="ChEBI" id="CHEBI:30616"/>
        <label>1</label>
    </ligand>
</feature>
<feature type="binding site" evidence="1">
    <location>
        <begin position="605"/>
        <end position="612"/>
    </location>
    <ligand>
        <name>ATP</name>
        <dbReference type="ChEBI" id="CHEBI:30616"/>
        <label>2</label>
    </ligand>
</feature>
<dbReference type="EMBL" id="AE017143">
    <property type="protein sequence ID" value="AAP95500.1"/>
    <property type="molecule type" value="Genomic_DNA"/>
</dbReference>
<dbReference type="RefSeq" id="WP_010944553.1">
    <property type="nucleotide sequence ID" value="NC_002940.2"/>
</dbReference>
<dbReference type="SMR" id="Q7VNH1"/>
<dbReference type="STRING" id="233412.HD_0565"/>
<dbReference type="KEGG" id="hdu:HD_0565"/>
<dbReference type="eggNOG" id="COG0542">
    <property type="taxonomic scope" value="Bacteria"/>
</dbReference>
<dbReference type="HOGENOM" id="CLU_005070_4_2_6"/>
<dbReference type="OrthoDB" id="9803641at2"/>
<dbReference type="Proteomes" id="UP000001022">
    <property type="component" value="Chromosome"/>
</dbReference>
<dbReference type="GO" id="GO:0005737">
    <property type="term" value="C:cytoplasm"/>
    <property type="evidence" value="ECO:0007669"/>
    <property type="project" value="UniProtKB-SubCell"/>
</dbReference>
<dbReference type="GO" id="GO:0005524">
    <property type="term" value="F:ATP binding"/>
    <property type="evidence" value="ECO:0007669"/>
    <property type="project" value="UniProtKB-KW"/>
</dbReference>
<dbReference type="GO" id="GO:0016887">
    <property type="term" value="F:ATP hydrolysis activity"/>
    <property type="evidence" value="ECO:0007669"/>
    <property type="project" value="InterPro"/>
</dbReference>
<dbReference type="GO" id="GO:0034605">
    <property type="term" value="P:cellular response to heat"/>
    <property type="evidence" value="ECO:0007669"/>
    <property type="project" value="TreeGrafter"/>
</dbReference>
<dbReference type="GO" id="GO:0042026">
    <property type="term" value="P:protein refolding"/>
    <property type="evidence" value="ECO:0007669"/>
    <property type="project" value="InterPro"/>
</dbReference>
<dbReference type="CDD" id="cd00009">
    <property type="entry name" value="AAA"/>
    <property type="match status" value="1"/>
</dbReference>
<dbReference type="CDD" id="cd19499">
    <property type="entry name" value="RecA-like_ClpB_Hsp104-like"/>
    <property type="match status" value="1"/>
</dbReference>
<dbReference type="FunFam" id="3.40.50.300:FF:000120">
    <property type="entry name" value="ATP-dependent chaperone ClpB"/>
    <property type="match status" value="1"/>
</dbReference>
<dbReference type="FunFam" id="3.40.50.300:FF:000025">
    <property type="entry name" value="ATP-dependent Clp protease subunit"/>
    <property type="match status" value="1"/>
</dbReference>
<dbReference type="FunFam" id="3.40.50.300:FF:000010">
    <property type="entry name" value="Chaperone clpB 1, putative"/>
    <property type="match status" value="1"/>
</dbReference>
<dbReference type="Gene3D" id="1.10.8.60">
    <property type="match status" value="1"/>
</dbReference>
<dbReference type="Gene3D" id="1.10.1780.10">
    <property type="entry name" value="Clp, N-terminal domain"/>
    <property type="match status" value="1"/>
</dbReference>
<dbReference type="Gene3D" id="3.40.50.300">
    <property type="entry name" value="P-loop containing nucleotide triphosphate hydrolases"/>
    <property type="match status" value="3"/>
</dbReference>
<dbReference type="InterPro" id="IPR003593">
    <property type="entry name" value="AAA+_ATPase"/>
</dbReference>
<dbReference type="InterPro" id="IPR003959">
    <property type="entry name" value="ATPase_AAA_core"/>
</dbReference>
<dbReference type="InterPro" id="IPR017730">
    <property type="entry name" value="Chaperonin_ClpB"/>
</dbReference>
<dbReference type="InterPro" id="IPR019489">
    <property type="entry name" value="Clp_ATPase_C"/>
</dbReference>
<dbReference type="InterPro" id="IPR036628">
    <property type="entry name" value="Clp_N_dom_sf"/>
</dbReference>
<dbReference type="InterPro" id="IPR004176">
    <property type="entry name" value="Clp_R_dom"/>
</dbReference>
<dbReference type="InterPro" id="IPR001270">
    <property type="entry name" value="ClpA/B"/>
</dbReference>
<dbReference type="InterPro" id="IPR018368">
    <property type="entry name" value="ClpA/B_CS1"/>
</dbReference>
<dbReference type="InterPro" id="IPR028299">
    <property type="entry name" value="ClpA/B_CS2"/>
</dbReference>
<dbReference type="InterPro" id="IPR041546">
    <property type="entry name" value="ClpA/ClpB_AAA_lid"/>
</dbReference>
<dbReference type="InterPro" id="IPR050130">
    <property type="entry name" value="ClpA_ClpB"/>
</dbReference>
<dbReference type="InterPro" id="IPR027417">
    <property type="entry name" value="P-loop_NTPase"/>
</dbReference>
<dbReference type="NCBIfam" id="TIGR03346">
    <property type="entry name" value="chaperone_ClpB"/>
    <property type="match status" value="1"/>
</dbReference>
<dbReference type="NCBIfam" id="NF008118">
    <property type="entry name" value="PRK10865.1"/>
    <property type="match status" value="1"/>
</dbReference>
<dbReference type="PANTHER" id="PTHR11638">
    <property type="entry name" value="ATP-DEPENDENT CLP PROTEASE"/>
    <property type="match status" value="1"/>
</dbReference>
<dbReference type="PANTHER" id="PTHR11638:SF18">
    <property type="entry name" value="HEAT SHOCK PROTEIN 104"/>
    <property type="match status" value="1"/>
</dbReference>
<dbReference type="Pfam" id="PF00004">
    <property type="entry name" value="AAA"/>
    <property type="match status" value="1"/>
</dbReference>
<dbReference type="Pfam" id="PF07724">
    <property type="entry name" value="AAA_2"/>
    <property type="match status" value="1"/>
</dbReference>
<dbReference type="Pfam" id="PF17871">
    <property type="entry name" value="AAA_lid_9"/>
    <property type="match status" value="1"/>
</dbReference>
<dbReference type="Pfam" id="PF02861">
    <property type="entry name" value="Clp_N"/>
    <property type="match status" value="2"/>
</dbReference>
<dbReference type="Pfam" id="PF10431">
    <property type="entry name" value="ClpB_D2-small"/>
    <property type="match status" value="1"/>
</dbReference>
<dbReference type="PRINTS" id="PR00300">
    <property type="entry name" value="CLPPROTEASEA"/>
</dbReference>
<dbReference type="SMART" id="SM00382">
    <property type="entry name" value="AAA"/>
    <property type="match status" value="2"/>
</dbReference>
<dbReference type="SMART" id="SM01086">
    <property type="entry name" value="ClpB_D2-small"/>
    <property type="match status" value="1"/>
</dbReference>
<dbReference type="SUPFAM" id="SSF81923">
    <property type="entry name" value="Double Clp-N motif"/>
    <property type="match status" value="1"/>
</dbReference>
<dbReference type="SUPFAM" id="SSF52540">
    <property type="entry name" value="P-loop containing nucleoside triphosphate hydrolases"/>
    <property type="match status" value="2"/>
</dbReference>
<dbReference type="PROSITE" id="PS51903">
    <property type="entry name" value="CLP_R"/>
    <property type="match status" value="1"/>
</dbReference>
<dbReference type="PROSITE" id="PS00870">
    <property type="entry name" value="CLPAB_1"/>
    <property type="match status" value="1"/>
</dbReference>
<dbReference type="PROSITE" id="PS00871">
    <property type="entry name" value="CLPAB_2"/>
    <property type="match status" value="1"/>
</dbReference>
<evidence type="ECO:0000250" key="1"/>
<evidence type="ECO:0000255" key="2">
    <source>
        <dbReference type="PROSITE-ProRule" id="PRU01251"/>
    </source>
</evidence>
<evidence type="ECO:0000305" key="3"/>
<name>CLPB_HAEDU</name>
<reference key="1">
    <citation type="submission" date="2003-06" db="EMBL/GenBank/DDBJ databases">
        <title>The complete genome sequence of Haemophilus ducreyi.</title>
        <authorList>
            <person name="Munson R.S. Jr."/>
            <person name="Ray W.C."/>
            <person name="Mahairas G."/>
            <person name="Sabo P."/>
            <person name="Mungur R."/>
            <person name="Johnson L."/>
            <person name="Nguyen D."/>
            <person name="Wang J."/>
            <person name="Forst C."/>
            <person name="Hood L."/>
        </authorList>
    </citation>
    <scope>NUCLEOTIDE SEQUENCE [LARGE SCALE GENOMIC DNA]</scope>
    <source>
        <strain>35000HP / ATCC 700724</strain>
    </source>
</reference>
<organism>
    <name type="scientific">Haemophilus ducreyi (strain 35000HP / ATCC 700724)</name>
    <dbReference type="NCBI Taxonomy" id="233412"/>
    <lineage>
        <taxon>Bacteria</taxon>
        <taxon>Pseudomonadati</taxon>
        <taxon>Pseudomonadota</taxon>
        <taxon>Gammaproteobacteria</taxon>
        <taxon>Pasteurellales</taxon>
        <taxon>Pasteurellaceae</taxon>
        <taxon>Haemophilus</taxon>
    </lineage>
</organism>
<proteinExistence type="inferred from homology"/>
<keyword id="KW-0067">ATP-binding</keyword>
<keyword id="KW-0143">Chaperone</keyword>
<keyword id="KW-0175">Coiled coil</keyword>
<keyword id="KW-0963">Cytoplasm</keyword>
<keyword id="KW-0547">Nucleotide-binding</keyword>
<keyword id="KW-1185">Reference proteome</keyword>
<keyword id="KW-0677">Repeat</keyword>
<keyword id="KW-0346">Stress response</keyword>
<gene>
    <name type="primary">clpB</name>
    <name type="ordered locus">HD_0565</name>
</gene>